<reference key="1">
    <citation type="journal article" date="2002" name="FEBS Lett.">
        <title>Novel human G protein-coupled receptors with long N-terminals containing GPS domains and Ser/Thr-rich regions.</title>
        <authorList>
            <person name="Fredriksson R."/>
            <person name="Lagerstroem M.C."/>
            <person name="Hoeglund P.J."/>
            <person name="Schioeth H.B."/>
        </authorList>
    </citation>
    <scope>NUCLEOTIDE SEQUENCE [MRNA] (ISOFORM 1)</scope>
</reference>
<reference key="2">
    <citation type="submission" date="2001-07" db="EMBL/GenBank/DDBJ databases">
        <title>Genome-wide discovery and analysis of human seven transmembrane helix receptor genes.</title>
        <authorList>
            <person name="Suwa M."/>
            <person name="Sato T."/>
            <person name="Okouchi I."/>
            <person name="Arita M."/>
            <person name="Futami K."/>
            <person name="Matsumoto S."/>
            <person name="Tsutsumi S."/>
            <person name="Aburatani H."/>
            <person name="Asai K."/>
            <person name="Akiyama Y."/>
        </authorList>
    </citation>
    <scope>NUCLEOTIDE SEQUENCE [GENOMIC DNA]</scope>
</reference>
<reference key="3">
    <citation type="journal article" date="2003" name="Genome Res.">
        <title>The secreted protein discovery initiative (SPDI), a large-scale effort to identify novel human secreted and transmembrane proteins: a bioinformatics assessment.</title>
        <authorList>
            <person name="Clark H.F."/>
            <person name="Gurney A.L."/>
            <person name="Abaya E."/>
            <person name="Baker K."/>
            <person name="Baldwin D.T."/>
            <person name="Brush J."/>
            <person name="Chen J."/>
            <person name="Chow B."/>
            <person name="Chui C."/>
            <person name="Crowley C."/>
            <person name="Currell B."/>
            <person name="Deuel B."/>
            <person name="Dowd P."/>
            <person name="Eaton D."/>
            <person name="Foster J.S."/>
            <person name="Grimaldi C."/>
            <person name="Gu Q."/>
            <person name="Hass P.E."/>
            <person name="Heldens S."/>
            <person name="Huang A."/>
            <person name="Kim H.S."/>
            <person name="Klimowski L."/>
            <person name="Jin Y."/>
            <person name="Johnson S."/>
            <person name="Lee J."/>
            <person name="Lewis L."/>
            <person name="Liao D."/>
            <person name="Mark M.R."/>
            <person name="Robbie E."/>
            <person name="Sanchez C."/>
            <person name="Schoenfeld J."/>
            <person name="Seshagiri S."/>
            <person name="Simmons L."/>
            <person name="Singh J."/>
            <person name="Smith V."/>
            <person name="Stinson J."/>
            <person name="Vagts A."/>
            <person name="Vandlen R.L."/>
            <person name="Watanabe C."/>
            <person name="Wieand D."/>
            <person name="Woods K."/>
            <person name="Xie M.-H."/>
            <person name="Yansura D.G."/>
            <person name="Yi S."/>
            <person name="Yu G."/>
            <person name="Yuan J."/>
            <person name="Zhang M."/>
            <person name="Zhang Z."/>
            <person name="Goddard A.D."/>
            <person name="Wood W.I."/>
            <person name="Godowski P.J."/>
            <person name="Gray A.M."/>
        </authorList>
    </citation>
    <scope>NUCLEOTIDE SEQUENCE [LARGE SCALE MRNA] (ISOFORM 2)</scope>
    <scope>VARIANT THR-404</scope>
</reference>
<reference key="4">
    <citation type="journal article" date="2004" name="Nat. Genet.">
        <title>Complete sequencing and characterization of 21,243 full-length human cDNAs.</title>
        <authorList>
            <person name="Ota T."/>
            <person name="Suzuki Y."/>
            <person name="Nishikawa T."/>
            <person name="Otsuki T."/>
            <person name="Sugiyama T."/>
            <person name="Irie R."/>
            <person name="Wakamatsu A."/>
            <person name="Hayashi K."/>
            <person name="Sato H."/>
            <person name="Nagai K."/>
            <person name="Kimura K."/>
            <person name="Makita H."/>
            <person name="Sekine M."/>
            <person name="Obayashi M."/>
            <person name="Nishi T."/>
            <person name="Shibahara T."/>
            <person name="Tanaka T."/>
            <person name="Ishii S."/>
            <person name="Yamamoto J."/>
            <person name="Saito K."/>
            <person name="Kawai Y."/>
            <person name="Isono Y."/>
            <person name="Nakamura Y."/>
            <person name="Nagahari K."/>
            <person name="Murakami K."/>
            <person name="Yasuda T."/>
            <person name="Iwayanagi T."/>
            <person name="Wagatsuma M."/>
            <person name="Shiratori A."/>
            <person name="Sudo H."/>
            <person name="Hosoiri T."/>
            <person name="Kaku Y."/>
            <person name="Kodaira H."/>
            <person name="Kondo H."/>
            <person name="Sugawara M."/>
            <person name="Takahashi M."/>
            <person name="Kanda K."/>
            <person name="Yokoi T."/>
            <person name="Furuya T."/>
            <person name="Kikkawa E."/>
            <person name="Omura Y."/>
            <person name="Abe K."/>
            <person name="Kamihara K."/>
            <person name="Katsuta N."/>
            <person name="Sato K."/>
            <person name="Tanikawa M."/>
            <person name="Yamazaki M."/>
            <person name="Ninomiya K."/>
            <person name="Ishibashi T."/>
            <person name="Yamashita H."/>
            <person name="Murakawa K."/>
            <person name="Fujimori K."/>
            <person name="Tanai H."/>
            <person name="Kimata M."/>
            <person name="Watanabe M."/>
            <person name="Hiraoka S."/>
            <person name="Chiba Y."/>
            <person name="Ishida S."/>
            <person name="Ono Y."/>
            <person name="Takiguchi S."/>
            <person name="Watanabe S."/>
            <person name="Yosida M."/>
            <person name="Hotuta T."/>
            <person name="Kusano J."/>
            <person name="Kanehori K."/>
            <person name="Takahashi-Fujii A."/>
            <person name="Hara H."/>
            <person name="Tanase T.-O."/>
            <person name="Nomura Y."/>
            <person name="Togiya S."/>
            <person name="Komai F."/>
            <person name="Hara R."/>
            <person name="Takeuchi K."/>
            <person name="Arita M."/>
            <person name="Imose N."/>
            <person name="Musashino K."/>
            <person name="Yuuki H."/>
            <person name="Oshima A."/>
            <person name="Sasaki N."/>
            <person name="Aotsuka S."/>
            <person name="Yoshikawa Y."/>
            <person name="Matsunawa H."/>
            <person name="Ichihara T."/>
            <person name="Shiohata N."/>
            <person name="Sano S."/>
            <person name="Moriya S."/>
            <person name="Momiyama H."/>
            <person name="Satoh N."/>
            <person name="Takami S."/>
            <person name="Terashima Y."/>
            <person name="Suzuki O."/>
            <person name="Nakagawa S."/>
            <person name="Senoh A."/>
            <person name="Mizoguchi H."/>
            <person name="Goto Y."/>
            <person name="Shimizu F."/>
            <person name="Wakebe H."/>
            <person name="Hishigaki H."/>
            <person name="Watanabe T."/>
            <person name="Sugiyama A."/>
            <person name="Takemoto M."/>
            <person name="Kawakami B."/>
            <person name="Yamazaki M."/>
            <person name="Watanabe K."/>
            <person name="Kumagai A."/>
            <person name="Itakura S."/>
            <person name="Fukuzumi Y."/>
            <person name="Fujimori Y."/>
            <person name="Komiyama M."/>
            <person name="Tashiro H."/>
            <person name="Tanigami A."/>
            <person name="Fujiwara T."/>
            <person name="Ono T."/>
            <person name="Yamada K."/>
            <person name="Fujii Y."/>
            <person name="Ozaki K."/>
            <person name="Hirao M."/>
            <person name="Ohmori Y."/>
            <person name="Kawabata A."/>
            <person name="Hikiji T."/>
            <person name="Kobatake N."/>
            <person name="Inagaki H."/>
            <person name="Ikema Y."/>
            <person name="Okamoto S."/>
            <person name="Okitani R."/>
            <person name="Kawakami T."/>
            <person name="Noguchi S."/>
            <person name="Itoh T."/>
            <person name="Shigeta K."/>
            <person name="Senba T."/>
            <person name="Matsumura K."/>
            <person name="Nakajima Y."/>
            <person name="Mizuno T."/>
            <person name="Morinaga M."/>
            <person name="Sasaki M."/>
            <person name="Togashi T."/>
            <person name="Oyama M."/>
            <person name="Hata H."/>
            <person name="Watanabe M."/>
            <person name="Komatsu T."/>
            <person name="Mizushima-Sugano J."/>
            <person name="Satoh T."/>
            <person name="Shirai Y."/>
            <person name="Takahashi Y."/>
            <person name="Nakagawa K."/>
            <person name="Okumura K."/>
            <person name="Nagase T."/>
            <person name="Nomura N."/>
            <person name="Kikuchi H."/>
            <person name="Masuho Y."/>
            <person name="Yamashita R."/>
            <person name="Nakai K."/>
            <person name="Yada T."/>
            <person name="Nakamura Y."/>
            <person name="Ohara O."/>
            <person name="Isogai T."/>
            <person name="Sugano S."/>
        </authorList>
    </citation>
    <scope>NUCLEOTIDE SEQUENCE [LARGE SCALE MRNA] (ISOFORM 3)</scope>
    <source>
        <tissue>Cerebellum</tissue>
    </source>
</reference>
<reference key="5">
    <citation type="journal article" date="2005" name="Nature">
        <title>Generation and annotation of the DNA sequences of human chromosomes 2 and 4.</title>
        <authorList>
            <person name="Hillier L.W."/>
            <person name="Graves T.A."/>
            <person name="Fulton R.S."/>
            <person name="Fulton L.A."/>
            <person name="Pepin K.H."/>
            <person name="Minx P."/>
            <person name="Wagner-McPherson C."/>
            <person name="Layman D."/>
            <person name="Wylie K."/>
            <person name="Sekhon M."/>
            <person name="Becker M.C."/>
            <person name="Fewell G.A."/>
            <person name="Delehaunty K.D."/>
            <person name="Miner T.L."/>
            <person name="Nash W.E."/>
            <person name="Kremitzki C."/>
            <person name="Oddy L."/>
            <person name="Du H."/>
            <person name="Sun H."/>
            <person name="Bradshaw-Cordum H."/>
            <person name="Ali J."/>
            <person name="Carter J."/>
            <person name="Cordes M."/>
            <person name="Harris A."/>
            <person name="Isak A."/>
            <person name="van Brunt A."/>
            <person name="Nguyen C."/>
            <person name="Du F."/>
            <person name="Courtney L."/>
            <person name="Kalicki J."/>
            <person name="Ozersky P."/>
            <person name="Abbott S."/>
            <person name="Armstrong J."/>
            <person name="Belter E.A."/>
            <person name="Caruso L."/>
            <person name="Cedroni M."/>
            <person name="Cotton M."/>
            <person name="Davidson T."/>
            <person name="Desai A."/>
            <person name="Elliott G."/>
            <person name="Erb T."/>
            <person name="Fronick C."/>
            <person name="Gaige T."/>
            <person name="Haakenson W."/>
            <person name="Haglund K."/>
            <person name="Holmes A."/>
            <person name="Harkins R."/>
            <person name="Kim K."/>
            <person name="Kruchowski S.S."/>
            <person name="Strong C.M."/>
            <person name="Grewal N."/>
            <person name="Goyea E."/>
            <person name="Hou S."/>
            <person name="Levy A."/>
            <person name="Martinka S."/>
            <person name="Mead K."/>
            <person name="McLellan M.D."/>
            <person name="Meyer R."/>
            <person name="Randall-Maher J."/>
            <person name="Tomlinson C."/>
            <person name="Dauphin-Kohlberg S."/>
            <person name="Kozlowicz-Reilly A."/>
            <person name="Shah N."/>
            <person name="Swearengen-Shahid S."/>
            <person name="Snider J."/>
            <person name="Strong J.T."/>
            <person name="Thompson J."/>
            <person name="Yoakum M."/>
            <person name="Leonard S."/>
            <person name="Pearman C."/>
            <person name="Trani L."/>
            <person name="Radionenko M."/>
            <person name="Waligorski J.E."/>
            <person name="Wang C."/>
            <person name="Rock S.M."/>
            <person name="Tin-Wollam A.-M."/>
            <person name="Maupin R."/>
            <person name="Latreille P."/>
            <person name="Wendl M.C."/>
            <person name="Yang S.-P."/>
            <person name="Pohl C."/>
            <person name="Wallis J.W."/>
            <person name="Spieth J."/>
            <person name="Bieri T.A."/>
            <person name="Berkowicz N."/>
            <person name="Nelson J.O."/>
            <person name="Osborne J."/>
            <person name="Ding L."/>
            <person name="Meyer R."/>
            <person name="Sabo A."/>
            <person name="Shotland Y."/>
            <person name="Sinha P."/>
            <person name="Wohldmann P.E."/>
            <person name="Cook L.L."/>
            <person name="Hickenbotham M.T."/>
            <person name="Eldred J."/>
            <person name="Williams D."/>
            <person name="Jones T.A."/>
            <person name="She X."/>
            <person name="Ciccarelli F.D."/>
            <person name="Izaurralde E."/>
            <person name="Taylor J."/>
            <person name="Schmutz J."/>
            <person name="Myers R.M."/>
            <person name="Cox D.R."/>
            <person name="Huang X."/>
            <person name="McPherson J.D."/>
            <person name="Mardis E.R."/>
            <person name="Clifton S.W."/>
            <person name="Warren W.C."/>
            <person name="Chinwalla A.T."/>
            <person name="Eddy S.R."/>
            <person name="Marra M.A."/>
            <person name="Ovcharenko I."/>
            <person name="Furey T.S."/>
            <person name="Miller W."/>
            <person name="Eichler E.E."/>
            <person name="Bork P."/>
            <person name="Suyama M."/>
            <person name="Torrents D."/>
            <person name="Waterston R.H."/>
            <person name="Wilson R.K."/>
        </authorList>
    </citation>
    <scope>NUCLEOTIDE SEQUENCE [LARGE SCALE GENOMIC DNA]</scope>
</reference>
<reference key="6">
    <citation type="journal article" date="2002" name="FEBS Lett.">
        <title>Identification of G protein-coupled receptor genes from the human genome sequence.</title>
        <authorList>
            <person name="Takeda S."/>
            <person name="Kadowaki S."/>
            <person name="Haga T."/>
            <person name="Takaesu H."/>
            <person name="Mitaku S."/>
        </authorList>
    </citation>
    <scope>NUCLEOTIDE SEQUENCE [LARGE SCALE GENOMIC DNA] OF 563-1079</scope>
</reference>
<reference key="7">
    <citation type="journal article" date="2003" name="Proc. Natl. Acad. Sci. U.S.A.">
        <title>The G protein-coupled receptor repertoires of human and mouse.</title>
        <authorList>
            <person name="Vassilatis D.K."/>
            <person name="Hohmann J.G."/>
            <person name="Zeng H."/>
            <person name="Li F."/>
            <person name="Ranchalis J.E."/>
            <person name="Mortrud M.T."/>
            <person name="Brown A."/>
            <person name="Rodriguez S.S."/>
            <person name="Weller J.R."/>
            <person name="Wright A.C."/>
            <person name="Bergmann J.E."/>
            <person name="Gaitanaris G.A."/>
        </authorList>
    </citation>
    <scope>NUCLEOTIDE SEQUENCE [LARGE SCALE MRNA] OF 797-942</scope>
</reference>
<reference key="8">
    <citation type="journal article" date="2015" name="Pharmacol. Rev.">
        <title>International union of basic and clinical pharmacology. XCIV. Adhesion G protein-coupled receptors.</title>
        <authorList>
            <person name="Hamann J."/>
            <person name="Aust G."/>
            <person name="Arac D."/>
            <person name="Engel F.B."/>
            <person name="Formstone C."/>
            <person name="Fredriksson R."/>
            <person name="Hall R.A."/>
            <person name="Harty B.L."/>
            <person name="Kirchhoff C."/>
            <person name="Knapp B."/>
            <person name="Krishnan A."/>
            <person name="Liebscher I."/>
            <person name="Lin H.H."/>
            <person name="Martinelli D.C."/>
            <person name="Monk K.R."/>
            <person name="Peeters M.C."/>
            <person name="Piao X."/>
            <person name="Promel S."/>
            <person name="Schoneberg T."/>
            <person name="Schwartz T.W."/>
            <person name="Singer K."/>
            <person name="Stacey M."/>
            <person name="Ushkaryov Y.A."/>
            <person name="Vallon M."/>
            <person name="Wolfrum U."/>
            <person name="Wright M.W."/>
            <person name="Xu L."/>
            <person name="Langenhan T."/>
            <person name="Schioth H.B."/>
        </authorList>
    </citation>
    <scope>NOMENCLATURE</scope>
</reference>
<keyword id="KW-0025">Alternative splicing</keyword>
<keyword id="KW-1015">Disulfide bond</keyword>
<keyword id="KW-0297">G-protein coupled receptor</keyword>
<keyword id="KW-0325">Glycoprotein</keyword>
<keyword id="KW-0472">Membrane</keyword>
<keyword id="KW-0675">Receptor</keyword>
<keyword id="KW-1185">Reference proteome</keyword>
<keyword id="KW-0732">Signal</keyword>
<keyword id="KW-0807">Transducer</keyword>
<keyword id="KW-0812">Transmembrane</keyword>
<keyword id="KW-1133">Transmembrane helix</keyword>
<protein>
    <recommendedName>
        <fullName>Adhesion G-protein coupled receptor F3</fullName>
    </recommendedName>
    <alternativeName>
        <fullName>G-protein coupled receptor 113</fullName>
    </alternativeName>
    <alternativeName>
        <fullName>G-protein coupled receptor PGR23</fullName>
    </alternativeName>
</protein>
<name>AGRF3_HUMAN</name>
<dbReference type="EMBL" id="AY140955">
    <property type="protein sequence ID" value="AAN46669.1"/>
    <property type="molecule type" value="mRNA"/>
</dbReference>
<dbReference type="EMBL" id="AB065959">
    <property type="protein sequence ID" value="BAC45265.1"/>
    <property type="status" value="ALT_SEQ"/>
    <property type="molecule type" value="Genomic_DNA"/>
</dbReference>
<dbReference type="EMBL" id="AY358172">
    <property type="protein sequence ID" value="AAQ88539.1"/>
    <property type="molecule type" value="mRNA"/>
</dbReference>
<dbReference type="EMBL" id="AY358214">
    <property type="protein sequence ID" value="AAQ88581.1"/>
    <property type="molecule type" value="Transcribed_RNA"/>
</dbReference>
<dbReference type="EMBL" id="AB083619">
    <property type="protein sequence ID" value="BAB89332.1"/>
    <property type="status" value="ALT_INIT"/>
    <property type="molecule type" value="Genomic_DNA"/>
</dbReference>
<dbReference type="EMBL" id="AK293887">
    <property type="protein sequence ID" value="BAG57276.1"/>
    <property type="molecule type" value="mRNA"/>
</dbReference>
<dbReference type="EMBL" id="AC010896">
    <property type="protein sequence ID" value="AAY14645.1"/>
    <property type="molecule type" value="Genomic_DNA"/>
</dbReference>
<dbReference type="EMBL" id="AY255611">
    <property type="protein sequence ID" value="AAO85123.1"/>
    <property type="molecule type" value="mRNA"/>
</dbReference>
<dbReference type="CCDS" id="CCDS33159.2">
    <molecule id="Q8IZF5-2"/>
</dbReference>
<dbReference type="CCDS" id="CCDS46238.1">
    <molecule id="Q8IZF5-3"/>
</dbReference>
<dbReference type="CCDS" id="CCDS46239.1">
    <molecule id="Q8IZF5-1"/>
</dbReference>
<dbReference type="RefSeq" id="NP_001138640.1">
    <molecule id="Q8IZF5-1"/>
    <property type="nucleotide sequence ID" value="NM_001145168.1"/>
</dbReference>
<dbReference type="RefSeq" id="NP_001138641.1">
    <molecule id="Q8IZF5-3"/>
    <property type="nucleotide sequence ID" value="NM_001145169.1"/>
</dbReference>
<dbReference type="RefSeq" id="NP_001308900.1">
    <property type="nucleotide sequence ID" value="NM_001321971.1"/>
</dbReference>
<dbReference type="RefSeq" id="NP_001308904.1">
    <property type="nucleotide sequence ID" value="NM_001321975.1"/>
</dbReference>
<dbReference type="RefSeq" id="NP_722577.2">
    <molecule id="Q8IZF5-2"/>
    <property type="nucleotide sequence ID" value="NM_153835.4"/>
</dbReference>
<dbReference type="RefSeq" id="XP_054196829.1">
    <molecule id="Q8IZF5-3"/>
    <property type="nucleotide sequence ID" value="XM_054340854.1"/>
</dbReference>
<dbReference type="SMR" id="Q8IZF5"/>
<dbReference type="BioGRID" id="127907">
    <property type="interactions" value="21"/>
</dbReference>
<dbReference type="FunCoup" id="Q8IZF5">
    <property type="interactions" value="21"/>
</dbReference>
<dbReference type="IntAct" id="Q8IZF5">
    <property type="interactions" value="7"/>
</dbReference>
<dbReference type="STRING" id="9606.ENSP00000307831"/>
<dbReference type="ChEMBL" id="CHEMBL4523891"/>
<dbReference type="MEROPS" id="P02.028"/>
<dbReference type="GlyCosmos" id="Q8IZF5">
    <property type="glycosylation" value="6 sites, No reported glycans"/>
</dbReference>
<dbReference type="GlyGen" id="Q8IZF5">
    <property type="glycosylation" value="8 sites, 1 O-linked glycan (1 site)"/>
</dbReference>
<dbReference type="iPTMnet" id="Q8IZF5"/>
<dbReference type="PhosphoSitePlus" id="Q8IZF5"/>
<dbReference type="BioMuta" id="ADGRF3"/>
<dbReference type="DMDM" id="59797951"/>
<dbReference type="MassIVE" id="Q8IZF5"/>
<dbReference type="PaxDb" id="9606-ENSP00000307831"/>
<dbReference type="Antibodypedia" id="52007">
    <property type="antibodies" value="79 antibodies from 22 providers"/>
</dbReference>
<dbReference type="DNASU" id="165082"/>
<dbReference type="Ensembl" id="ENST00000311519.5">
    <molecule id="Q8IZF5-1"/>
    <property type="protein sequence ID" value="ENSP00000307831.1"/>
    <property type="gene ID" value="ENSG00000173567.16"/>
</dbReference>
<dbReference type="Ensembl" id="ENST00000333478.10">
    <molecule id="Q8IZF5-2"/>
    <property type="protein sequence ID" value="ENSP00000327396.6"/>
    <property type="gene ID" value="ENSG00000173567.16"/>
</dbReference>
<dbReference type="Ensembl" id="ENST00000421160.6">
    <molecule id="Q8IZF5-3"/>
    <property type="protein sequence ID" value="ENSP00000388537.2"/>
    <property type="gene ID" value="ENSG00000173567.16"/>
</dbReference>
<dbReference type="Ensembl" id="ENST00000447444.5">
    <molecule id="Q8IZF5-2"/>
    <property type="protein sequence ID" value="ENSP00000404775.1"/>
    <property type="gene ID" value="ENSG00000173567.16"/>
</dbReference>
<dbReference type="GeneID" id="165082"/>
<dbReference type="KEGG" id="hsa:165082"/>
<dbReference type="UCSC" id="uc002rhd.2">
    <molecule id="Q8IZF5-1"/>
    <property type="organism name" value="human"/>
</dbReference>
<dbReference type="AGR" id="HGNC:18989"/>
<dbReference type="CTD" id="165082"/>
<dbReference type="DisGeNET" id="165082"/>
<dbReference type="GeneCards" id="ADGRF3"/>
<dbReference type="HGNC" id="HGNC:18989">
    <property type="gene designation" value="ADGRF3"/>
</dbReference>
<dbReference type="HPA" id="ENSG00000173567">
    <property type="expression patterns" value="Tissue enhanced (pancreas)"/>
</dbReference>
<dbReference type="MIM" id="620873">
    <property type="type" value="gene"/>
</dbReference>
<dbReference type="neXtProt" id="NX_Q8IZF5"/>
<dbReference type="OpenTargets" id="ENSG00000173567"/>
<dbReference type="PharmGKB" id="PA134918027"/>
<dbReference type="VEuPathDB" id="HostDB:ENSG00000173567"/>
<dbReference type="eggNOG" id="KOG4193">
    <property type="taxonomic scope" value="Eukaryota"/>
</dbReference>
<dbReference type="GeneTree" id="ENSGT00940000161541"/>
<dbReference type="HOGENOM" id="CLU_010357_0_0_1"/>
<dbReference type="InParanoid" id="Q8IZF5"/>
<dbReference type="OMA" id="YQWNASV"/>
<dbReference type="OrthoDB" id="10040049at2759"/>
<dbReference type="PAN-GO" id="Q8IZF5">
    <property type="GO annotations" value="2 GO annotations based on evolutionary models"/>
</dbReference>
<dbReference type="PhylomeDB" id="Q8IZF5"/>
<dbReference type="TreeFam" id="TF316380"/>
<dbReference type="PathwayCommons" id="Q8IZF5"/>
<dbReference type="BioGRID-ORCS" id="165082">
    <property type="hits" value="15 hits in 1144 CRISPR screens"/>
</dbReference>
<dbReference type="GeneWiki" id="GPR113"/>
<dbReference type="GenomeRNAi" id="165082"/>
<dbReference type="Pharos" id="Q8IZF5">
    <property type="development level" value="Tdark"/>
</dbReference>
<dbReference type="PRO" id="PR:Q8IZF5"/>
<dbReference type="Proteomes" id="UP000005640">
    <property type="component" value="Chromosome 2"/>
</dbReference>
<dbReference type="RNAct" id="Q8IZF5">
    <property type="molecule type" value="protein"/>
</dbReference>
<dbReference type="Bgee" id="ENSG00000173567">
    <property type="expression patterns" value="Expressed in male germ line stem cell (sensu Vertebrata) in testis and 94 other cell types or tissues"/>
</dbReference>
<dbReference type="ExpressionAtlas" id="Q8IZF5">
    <property type="expression patterns" value="baseline and differential"/>
</dbReference>
<dbReference type="GO" id="GO:0016020">
    <property type="term" value="C:membrane"/>
    <property type="evidence" value="ECO:0000304"/>
    <property type="project" value="GDB"/>
</dbReference>
<dbReference type="GO" id="GO:0004930">
    <property type="term" value="F:G protein-coupled receptor activity"/>
    <property type="evidence" value="ECO:0000318"/>
    <property type="project" value="GO_Central"/>
</dbReference>
<dbReference type="GO" id="GO:0007189">
    <property type="term" value="P:adenylate cyclase-activating G protein-coupled receptor signaling pathway"/>
    <property type="evidence" value="ECO:0000318"/>
    <property type="project" value="GO_Central"/>
</dbReference>
<dbReference type="GO" id="GO:0007166">
    <property type="term" value="P:cell surface receptor signaling pathway"/>
    <property type="evidence" value="ECO:0007669"/>
    <property type="project" value="InterPro"/>
</dbReference>
<dbReference type="GO" id="GO:0007186">
    <property type="term" value="P:G protein-coupled receptor signaling pathway"/>
    <property type="evidence" value="ECO:0000304"/>
    <property type="project" value="GDB"/>
</dbReference>
<dbReference type="CDD" id="cd15253">
    <property type="entry name" value="7tmB2_GPR113"/>
    <property type="match status" value="1"/>
</dbReference>
<dbReference type="FunFam" id="2.60.220.50:FF:000017">
    <property type="entry name" value="Adhesion G protein-coupled receptor F3"/>
    <property type="match status" value="1"/>
</dbReference>
<dbReference type="FunFam" id="1.20.1070.10:FF:000058">
    <property type="entry name" value="Adhesion G protein-coupled receptor F5"/>
    <property type="match status" value="1"/>
</dbReference>
<dbReference type="Gene3D" id="2.60.220.50">
    <property type="match status" value="1"/>
</dbReference>
<dbReference type="Gene3D" id="4.10.1240.10">
    <property type="entry name" value="GPCR, family 2, extracellular hormone receptor domain"/>
    <property type="match status" value="1"/>
</dbReference>
<dbReference type="Gene3D" id="1.20.1070.10">
    <property type="entry name" value="Rhodopsin 7-helix transmembrane proteins"/>
    <property type="match status" value="1"/>
</dbReference>
<dbReference type="InterPro" id="IPR051587">
    <property type="entry name" value="Adhesion_GPCR"/>
</dbReference>
<dbReference type="InterPro" id="IPR057244">
    <property type="entry name" value="GAIN_B"/>
</dbReference>
<dbReference type="InterPro" id="IPR046338">
    <property type="entry name" value="GAIN_dom_sf"/>
</dbReference>
<dbReference type="InterPro" id="IPR017981">
    <property type="entry name" value="GPCR_2-like_7TM"/>
</dbReference>
<dbReference type="InterPro" id="IPR036445">
    <property type="entry name" value="GPCR_2_extracell_dom_sf"/>
</dbReference>
<dbReference type="InterPro" id="IPR001879">
    <property type="entry name" value="GPCR_2_extracellular_dom"/>
</dbReference>
<dbReference type="InterPro" id="IPR000832">
    <property type="entry name" value="GPCR_2_secretin-like"/>
</dbReference>
<dbReference type="InterPro" id="IPR017983">
    <property type="entry name" value="GPCR_2_secretin-like_CS"/>
</dbReference>
<dbReference type="InterPro" id="IPR000203">
    <property type="entry name" value="GPS"/>
</dbReference>
<dbReference type="InterPro" id="IPR056274">
    <property type="entry name" value="Ig_ADGRF3"/>
</dbReference>
<dbReference type="PANTHER" id="PTHR45813:SF2">
    <property type="entry name" value="ADHESION G-PROTEIN COUPLED RECEPTOR F3"/>
    <property type="match status" value="1"/>
</dbReference>
<dbReference type="PANTHER" id="PTHR45813">
    <property type="entry name" value="IG-LIKE DOMAIN-CONTAINING PROTEIN"/>
    <property type="match status" value="1"/>
</dbReference>
<dbReference type="Pfam" id="PF00002">
    <property type="entry name" value="7tm_2"/>
    <property type="match status" value="1"/>
</dbReference>
<dbReference type="Pfam" id="PF25387">
    <property type="entry name" value="ADGRF3_N"/>
    <property type="match status" value="1"/>
</dbReference>
<dbReference type="Pfam" id="PF01825">
    <property type="entry name" value="GPS"/>
    <property type="match status" value="1"/>
</dbReference>
<dbReference type="Pfam" id="PF02793">
    <property type="entry name" value="HRM"/>
    <property type="match status" value="1"/>
</dbReference>
<dbReference type="Pfam" id="PF24528">
    <property type="entry name" value="Ig_ADGRF3"/>
    <property type="match status" value="1"/>
</dbReference>
<dbReference type="PRINTS" id="PR00249">
    <property type="entry name" value="GPCRSECRETIN"/>
</dbReference>
<dbReference type="SMART" id="SM00303">
    <property type="entry name" value="GPS"/>
    <property type="match status" value="1"/>
</dbReference>
<dbReference type="SUPFAM" id="SSF81321">
    <property type="entry name" value="Family A G protein-coupled receptor-like"/>
    <property type="match status" value="1"/>
</dbReference>
<dbReference type="SUPFAM" id="SSF111418">
    <property type="entry name" value="Hormone receptor domain"/>
    <property type="match status" value="1"/>
</dbReference>
<dbReference type="PROSITE" id="PS00650">
    <property type="entry name" value="G_PROTEIN_RECEP_F2_2"/>
    <property type="match status" value="1"/>
</dbReference>
<dbReference type="PROSITE" id="PS50227">
    <property type="entry name" value="G_PROTEIN_RECEP_F2_3"/>
    <property type="match status" value="1"/>
</dbReference>
<dbReference type="PROSITE" id="PS50261">
    <property type="entry name" value="G_PROTEIN_RECEP_F2_4"/>
    <property type="match status" value="1"/>
</dbReference>
<dbReference type="PROSITE" id="PS50221">
    <property type="entry name" value="GAIN_B"/>
    <property type="match status" value="1"/>
</dbReference>
<evidence type="ECO:0000255" key="1"/>
<evidence type="ECO:0000255" key="2">
    <source>
        <dbReference type="PROSITE-ProRule" id="PRU00098"/>
    </source>
</evidence>
<evidence type="ECO:0000269" key="3">
    <source>
    </source>
</evidence>
<evidence type="ECO:0000303" key="4">
    <source>
    </source>
</evidence>
<evidence type="ECO:0000303" key="5">
    <source>
    </source>
</evidence>
<evidence type="ECO:0000305" key="6"/>
<gene>
    <name type="primary">ADGRF3</name>
    <name type="synonym">GPR113</name>
    <name type="synonym">PGR23</name>
    <name type="ORF">UNQ9196/PRO34000</name>
</gene>
<accession>Q8IZF5</accession>
<accession>B4DF15</accession>
<accession>E9PEV1</accession>
<accession>Q53TA5</accession>
<accession>Q6UXT7</accession>
<accession>Q6UXX3</accession>
<accession>Q86SL7</accession>
<accession>Q8IXD8</accession>
<accession>Q8TDT3</accession>
<feature type="signal peptide" evidence="1">
    <location>
        <begin position="1"/>
        <end position="25"/>
    </location>
</feature>
<feature type="chain" id="PRO_0000012893" description="Adhesion G-protein coupled receptor F3">
    <location>
        <begin position="26"/>
        <end position="1079"/>
    </location>
</feature>
<feature type="topological domain" description="Extracellular" evidence="6">
    <location>
        <begin position="26"/>
        <end position="775"/>
    </location>
</feature>
<feature type="transmembrane region" description="Helical; Name=1" evidence="1">
    <location>
        <begin position="776"/>
        <end position="796"/>
    </location>
</feature>
<feature type="topological domain" description="Cytoplasmic" evidence="6">
    <location>
        <begin position="797"/>
        <end position="811"/>
    </location>
</feature>
<feature type="transmembrane region" description="Helical; Name=2" evidence="1">
    <location>
        <begin position="812"/>
        <end position="832"/>
    </location>
</feature>
<feature type="topological domain" description="Extracellular" evidence="6">
    <location>
        <begin position="833"/>
        <end position="851"/>
    </location>
</feature>
<feature type="transmembrane region" description="Helical; Name=3" evidence="1">
    <location>
        <begin position="852"/>
        <end position="874"/>
    </location>
</feature>
<feature type="topological domain" description="Cytoplasmic" evidence="6">
    <location>
        <begin position="875"/>
        <end position="881"/>
    </location>
</feature>
<feature type="transmembrane region" description="Helical; Name=4" evidence="1">
    <location>
        <begin position="882"/>
        <end position="902"/>
    </location>
</feature>
<feature type="topological domain" description="Extracellular" evidence="6">
    <location>
        <begin position="903"/>
        <end position="928"/>
    </location>
</feature>
<feature type="transmembrane region" description="Helical; Name=5" evidence="1">
    <location>
        <begin position="929"/>
        <end position="949"/>
    </location>
</feature>
<feature type="topological domain" description="Cytoplasmic" evidence="6">
    <location>
        <begin position="950"/>
        <end position="973"/>
    </location>
</feature>
<feature type="transmembrane region" description="Helical; Name=6" evidence="1">
    <location>
        <begin position="974"/>
        <end position="994"/>
    </location>
</feature>
<feature type="topological domain" description="Extracellular" evidence="6">
    <location>
        <begin position="995"/>
        <end position="1002"/>
    </location>
</feature>
<feature type="transmembrane region" description="Helical; Name=7" evidence="1">
    <location>
        <begin position="1003"/>
        <end position="1023"/>
    </location>
</feature>
<feature type="topological domain" description="Cytoplasmic" evidence="6">
    <location>
        <begin position="1024"/>
        <end position="1079"/>
    </location>
</feature>
<feature type="domain" description="GAIN-B" evidence="2">
    <location>
        <begin position="599"/>
        <end position="765"/>
    </location>
</feature>
<feature type="region of interest" description="GPS" evidence="2">
    <location>
        <begin position="715"/>
        <end position="765"/>
    </location>
</feature>
<feature type="site" description="Cleavage; by autolysis" evidence="2">
    <location>
        <begin position="752"/>
        <end position="753"/>
    </location>
</feature>
<feature type="glycosylation site" description="N-linked (GlcNAc...) asparagine" evidence="1">
    <location>
        <position position="188"/>
    </location>
</feature>
<feature type="glycosylation site" description="N-linked (GlcNAc...) asparagine" evidence="1">
    <location>
        <position position="264"/>
    </location>
</feature>
<feature type="glycosylation site" description="N-linked (GlcNAc...) asparagine" evidence="1">
    <location>
        <position position="301"/>
    </location>
</feature>
<feature type="glycosylation site" description="N-linked (GlcNAc...) asparagine" evidence="1">
    <location>
        <position position="382"/>
    </location>
</feature>
<feature type="glycosylation site" description="N-linked (GlcNAc...) asparagine" evidence="1">
    <location>
        <position position="441"/>
    </location>
</feature>
<feature type="glycosylation site" description="N-linked (GlcNAc...) asparagine" evidence="1">
    <location>
        <position position="648"/>
    </location>
</feature>
<feature type="disulfide bond" evidence="2">
    <location>
        <begin position="715"/>
        <end position="747"/>
    </location>
</feature>
<feature type="disulfide bond" evidence="2">
    <location>
        <begin position="734"/>
        <end position="749"/>
    </location>
</feature>
<feature type="splice variant" id="VSP_012815" description="In isoform 2." evidence="4">
    <original>MVCSAAPLLLLATTLPLLGSPVAQASQPVSETGVRPREGLQRRQWGPLIGRDKAWNERIDRPFPACPIPLSSSFGRWPKGQTMWAQTSTLTLTEEEL</original>
    <variation>MTTRKLSAHSAATPGYKAVTHKHHTGWARMAKTGLPEK</variation>
    <location>
        <begin position="1"/>
        <end position="97"/>
    </location>
</feature>
<feature type="splice variant" id="VSP_046174" description="In isoform 3." evidence="5">
    <location>
        <begin position="29"/>
        <end position="97"/>
    </location>
</feature>
<feature type="splice variant" id="VSP_012816" description="In isoform 2." evidence="4">
    <location>
        <begin position="168"/>
        <end position="307"/>
    </location>
</feature>
<feature type="splice variant" id="VSP_012817" description="In isoform 2." evidence="4">
    <original>VSCCLQILSCASKSMSEGIPWPSSEDMGTARS</original>
    <variation>ATNEGCILEHSKGGSDTARKTDASE</variation>
    <location>
        <begin position="1048"/>
        <end position="1079"/>
    </location>
</feature>
<feature type="splice variant" id="VSP_046175" description="In isoform 3." evidence="5">
    <original>VSCCLQILSCASKSMSEGIPWPSSEDMGTARS</original>
    <variation>ATNEGCILEHSKGGSDTAR</variation>
    <location>
        <begin position="1048"/>
        <end position="1079"/>
    </location>
</feature>
<feature type="sequence variant" id="VAR_024475" description="In dbSNP:rs2052937." evidence="3">
    <original>A</original>
    <variation>T</variation>
    <location>
        <position position="404"/>
    </location>
</feature>
<feature type="sequence conflict" description="In Ref. 3; AAQ88539." evidence="6" ref="3">
    <original>A</original>
    <variation>V</variation>
    <location>
        <position position="348"/>
    </location>
</feature>
<feature type="sequence conflict" description="In Ref. 3; AAQ88539." evidence="6" ref="3">
    <original>H</original>
    <variation>Y</variation>
    <location>
        <position position="599"/>
    </location>
</feature>
<feature type="sequence conflict" description="In Ref. 4; BAG57276." evidence="6" ref="4">
    <original>P</original>
    <variation>S</variation>
    <location>
        <position position="765"/>
    </location>
</feature>
<feature type="sequence conflict" description="In Ref. 3; AAQ88581." evidence="6" ref="3">
    <original>M</original>
    <variation>T</variation>
    <location>
        <position position="886"/>
    </location>
</feature>
<feature type="sequence conflict" description="In Ref. 3; AAQ88581." evidence="6" ref="3">
    <original>K</original>
    <variation>N</variation>
    <location sequence="Q8IZF5-2">
        <position position="868"/>
    </location>
</feature>
<sequence>MVCSAAPLLLLATTLPLLGSPVAQASQPVSETGVRPREGLQRRQWGPLIGRDKAWNERIDRPFPACPIPLSSSFGRWPKGQTMWAQTSTLTLTEEELGQSQAGGESGSGQLLDQENGAGESALVSVYVHLDFPDKTWPPELSRTLTLPAASASSSPRPLLTGLRLTTECNVNHKGNFYCACLSGYQWNTSICLHYPPCQSLHNHQPCGCLVFSHPEPGYCQLLPPGSPVTCLPAVPGILNLNSQLQMPGDTLSLTLHLSQEATNLSWFLRHPGSPSPILLQPGTQVSVTSSHGQAALSVSNMSHHWAGEYMSCFEAQGFKWNLYEVVRVPLKATDVARLPYQLSISCATSPGFQLSCCIPSTNLAYTAAWSPGEGSKASSFNESGSQCFVLAVQRCPMADTTYACDLQSLGLAPLRVPISITIIQDGDITCPEDASVLTWNVTKAGHVAQAPCPESKRGIVRRLCGADGVWGPVHSSCTDARLLALFTRTKLLQAGQGSPAEEVPQILAQLPGQAAEASSPSDLLTLLSTMKYVAKVVAEARIQLDRRALKNLLIATDKVLDMDTRSLWTLAQARKPWAGSTLLLAVETLACSLCPQDHPFAFSLPNVLLQSQLFGPTFPADYSISFPTRPPLQAQIPRHSLAPLVRNGTEISITSLVLRKLDHLLPSNYGQGLGDSLYATPGLVLVISIMAGDRAFSQGEVIMDFGNTDGSPHCVFWDHSLFQGRGGWSKEGCQAQVASASPTAQCLCQHLTAFSVLMSPHTVPEEPALALLTQVGLGASILALLVCLGVYWLVWRVVVRNKISYFRHAALLNMVFCLLAADTCFLGAPFLSPGPRSPLCLAAAFLCHFLYLATFFWMLAQALVLAHQLLFVFHQLAKHRVLPLMVLLGYLCPLGLAGVTLGLYLPQGQYLREGECWLDGKGGALYTFVGPVLAIIGVNGLVLAMAMLKLLRPSLSEGPPAEKRQALLGVIKALLILTPIFGLTWGLGLATLLEEVSTVPHYIFTILNTLQGVFILLFGCLMDRKIQEALRKRFCRAQAPSSTISLVSCCLQILSCASKSMSEGIPWPSSEDMGTARS</sequence>
<proteinExistence type="evidence at transcript level"/>
<comment type="function">
    <text>Orphan receptor.</text>
</comment>
<comment type="subunit">
    <text evidence="2">Heterodimer of 2 chains generated by proteolytic processing; the large extracellular N-terminal fragment and the membrane-bound C-terminal fragment predominantly remain associated and non-covalently linked.</text>
</comment>
<comment type="subcellular location">
    <subcellularLocation>
        <location evidence="1">Membrane</location>
        <topology evidence="1">Multi-pass membrane protein</topology>
    </subcellularLocation>
</comment>
<comment type="alternative products">
    <event type="alternative splicing"/>
    <isoform>
        <id>Q8IZF5-1</id>
        <name>1</name>
        <sequence type="displayed"/>
    </isoform>
    <isoform>
        <id>Q8IZF5-2</id>
        <name>2</name>
        <sequence type="described" ref="VSP_012815 VSP_012816 VSP_012817"/>
    </isoform>
    <isoform>
        <id>Q8IZF5-3</id>
        <name>3</name>
        <sequence type="described" ref="VSP_046174 VSP_046175"/>
    </isoform>
</comment>
<comment type="PTM">
    <text evidence="2">Autoproteolytically processed at the GPS region of the GAIN-B domain; this cleavage modulates receptor activity.</text>
</comment>
<comment type="similarity">
    <text evidence="6">Belongs to the G-protein coupled receptor 2 family. Adhesion G-protein coupled receptor (ADGR) subfamily.</text>
</comment>
<comment type="sequence caution" evidence="6">
    <conflict type="erroneous initiation">
        <sequence resource="EMBL-CDS" id="BAB89332"/>
    </conflict>
</comment>
<comment type="sequence caution" evidence="6">
    <conflict type="erroneous gene model prediction">
        <sequence resource="EMBL-CDS" id="BAC45265"/>
    </conflict>
</comment>
<organism>
    <name type="scientific">Homo sapiens</name>
    <name type="common">Human</name>
    <dbReference type="NCBI Taxonomy" id="9606"/>
    <lineage>
        <taxon>Eukaryota</taxon>
        <taxon>Metazoa</taxon>
        <taxon>Chordata</taxon>
        <taxon>Craniata</taxon>
        <taxon>Vertebrata</taxon>
        <taxon>Euteleostomi</taxon>
        <taxon>Mammalia</taxon>
        <taxon>Eutheria</taxon>
        <taxon>Euarchontoglires</taxon>
        <taxon>Primates</taxon>
        <taxon>Haplorrhini</taxon>
        <taxon>Catarrhini</taxon>
        <taxon>Hominidae</taxon>
        <taxon>Homo</taxon>
    </lineage>
</organism>